<accession>P54967</accession>
<gene>
    <name type="primary">BIO2</name>
    <name type="synonym">BIOB</name>
    <name type="ordered locus">At2g43360</name>
    <name type="ORF">T01O24.10</name>
</gene>
<keyword id="KW-0001">2Fe-2S</keyword>
<keyword id="KW-0004">4Fe-4S</keyword>
<keyword id="KW-0093">Biotin biosynthesis</keyword>
<keyword id="KW-0408">Iron</keyword>
<keyword id="KW-0411">Iron-sulfur</keyword>
<keyword id="KW-0479">Metal-binding</keyword>
<keyword id="KW-0496">Mitochondrion</keyword>
<keyword id="KW-1185">Reference proteome</keyword>
<keyword id="KW-0949">S-adenosyl-L-methionine</keyword>
<keyword id="KW-0808">Transferase</keyword>
<keyword id="KW-0809">Transit peptide</keyword>
<name>BIOB_ARATH</name>
<organism>
    <name type="scientific">Arabidopsis thaliana</name>
    <name type="common">Mouse-ear cress</name>
    <dbReference type="NCBI Taxonomy" id="3702"/>
    <lineage>
        <taxon>Eukaryota</taxon>
        <taxon>Viridiplantae</taxon>
        <taxon>Streptophyta</taxon>
        <taxon>Embryophyta</taxon>
        <taxon>Tracheophyta</taxon>
        <taxon>Spermatophyta</taxon>
        <taxon>Magnoliopsida</taxon>
        <taxon>eudicotyledons</taxon>
        <taxon>Gunneridae</taxon>
        <taxon>Pentapetalae</taxon>
        <taxon>rosids</taxon>
        <taxon>malvids</taxon>
        <taxon>Brassicales</taxon>
        <taxon>Brassicaceae</taxon>
        <taxon>Camelineae</taxon>
        <taxon>Arabidopsis</taxon>
    </lineage>
</organism>
<feature type="transit peptide" description="Mitochondrion" evidence="4">
    <location>
        <begin position="1"/>
        <end position="26"/>
    </location>
</feature>
<feature type="chain" id="PRO_0000185565" description="Biotin synthase, mitochondrial">
    <location>
        <begin position="27"/>
        <end position="378"/>
    </location>
</feature>
<feature type="domain" description="Radical SAM core" evidence="2">
    <location>
        <begin position="79"/>
        <end position="308"/>
    </location>
</feature>
<feature type="region of interest" description="Disordered" evidence="3">
    <location>
        <begin position="357"/>
        <end position="378"/>
    </location>
</feature>
<feature type="binding site" evidence="1">
    <location>
        <position position="94"/>
    </location>
    <ligand>
        <name>[4Fe-4S] cluster</name>
        <dbReference type="ChEBI" id="CHEBI:49883"/>
        <note>4Fe-4S-S-AdoMet</note>
    </ligand>
</feature>
<feature type="binding site" evidence="1">
    <location>
        <position position="98"/>
    </location>
    <ligand>
        <name>[4Fe-4S] cluster</name>
        <dbReference type="ChEBI" id="CHEBI:49883"/>
        <note>4Fe-4S-S-AdoMet</note>
    </ligand>
</feature>
<feature type="binding site" evidence="1">
    <location>
        <position position="101"/>
    </location>
    <ligand>
        <name>[4Fe-4S] cluster</name>
        <dbReference type="ChEBI" id="CHEBI:49883"/>
        <note>4Fe-4S-S-AdoMet</note>
    </ligand>
</feature>
<feature type="binding site" evidence="1">
    <location>
        <position position="138"/>
    </location>
    <ligand>
        <name>[2Fe-2S] cluster</name>
        <dbReference type="ChEBI" id="CHEBI:190135"/>
    </ligand>
</feature>
<feature type="binding site" evidence="1">
    <location>
        <position position="171"/>
    </location>
    <ligand>
        <name>[2Fe-2S] cluster</name>
        <dbReference type="ChEBI" id="CHEBI:190135"/>
    </ligand>
</feature>
<feature type="binding site" evidence="1">
    <location>
        <position position="231"/>
    </location>
    <ligand>
        <name>[2Fe-2S] cluster</name>
        <dbReference type="ChEBI" id="CHEBI:190135"/>
    </ligand>
</feature>
<feature type="binding site" evidence="1">
    <location>
        <position position="303"/>
    </location>
    <ligand>
        <name>[2Fe-2S] cluster</name>
        <dbReference type="ChEBI" id="CHEBI:190135"/>
    </ligand>
</feature>
<evidence type="ECO:0000250" key="1"/>
<evidence type="ECO:0000255" key="2">
    <source>
        <dbReference type="PROSITE-ProRule" id="PRU01266"/>
    </source>
</evidence>
<evidence type="ECO:0000256" key="3">
    <source>
        <dbReference type="SAM" id="MobiDB-lite"/>
    </source>
</evidence>
<evidence type="ECO:0000269" key="4">
    <source>
    </source>
</evidence>
<evidence type="ECO:0000305" key="5"/>
<evidence type="ECO:0000305" key="6">
    <source>
    </source>
</evidence>
<proteinExistence type="evidence at protein level"/>
<comment type="catalytic activity">
    <reaction>
        <text>(4R,5S)-dethiobiotin + (sulfur carrier)-SH + 2 reduced [2Fe-2S]-[ferredoxin] + 2 S-adenosyl-L-methionine = (sulfur carrier)-H + biotin + 2 5'-deoxyadenosine + 2 L-methionine + 2 oxidized [2Fe-2S]-[ferredoxin]</text>
        <dbReference type="Rhea" id="RHEA:22060"/>
        <dbReference type="Rhea" id="RHEA-COMP:10000"/>
        <dbReference type="Rhea" id="RHEA-COMP:10001"/>
        <dbReference type="Rhea" id="RHEA-COMP:14737"/>
        <dbReference type="Rhea" id="RHEA-COMP:14739"/>
        <dbReference type="ChEBI" id="CHEBI:17319"/>
        <dbReference type="ChEBI" id="CHEBI:29917"/>
        <dbReference type="ChEBI" id="CHEBI:33737"/>
        <dbReference type="ChEBI" id="CHEBI:33738"/>
        <dbReference type="ChEBI" id="CHEBI:57586"/>
        <dbReference type="ChEBI" id="CHEBI:57844"/>
        <dbReference type="ChEBI" id="CHEBI:59789"/>
        <dbReference type="ChEBI" id="CHEBI:64428"/>
        <dbReference type="ChEBI" id="CHEBI:149473"/>
        <dbReference type="EC" id="2.8.1.6"/>
    </reaction>
</comment>
<comment type="cofactor">
    <cofactor evidence="1">
        <name>[4Fe-4S] cluster</name>
        <dbReference type="ChEBI" id="CHEBI:49883"/>
    </cofactor>
    <text evidence="1">Binds 1 [4Fe-4S] cluster. The cluster is coordinated with 3 cysteines and an exchangeable S-adenosyl-L-methionine.</text>
</comment>
<comment type="cofactor">
    <cofactor evidence="1">
        <name>[2Fe-2S] cluster</name>
        <dbReference type="ChEBI" id="CHEBI:190135"/>
    </cofactor>
    <text evidence="1">Binds 1 [2Fe-2S] cluster. The cluster is coordinated with 3 cysteines and 1 arginine.</text>
</comment>
<comment type="pathway">
    <text>Cofactor biosynthesis; biotin biosynthesis; biotin from 7,8-diaminononanoate: step 2/2.</text>
</comment>
<comment type="subcellular location">
    <subcellularLocation>
        <location evidence="6">Mitochondrion</location>
    </subcellularLocation>
</comment>
<comment type="similarity">
    <text evidence="5">Belongs to the radical SAM superfamily. Biotin synthase family.</text>
</comment>
<dbReference type="EC" id="2.8.1.6"/>
<dbReference type="EMBL" id="U24147">
    <property type="protein sequence ID" value="AAA80226.1"/>
    <property type="molecule type" value="Genomic_DNA"/>
</dbReference>
<dbReference type="EMBL" id="U31806">
    <property type="protein sequence ID" value="AAC49445.1"/>
    <property type="molecule type" value="mRNA"/>
</dbReference>
<dbReference type="EMBL" id="L34413">
    <property type="protein sequence ID" value="AAB39953.1"/>
    <property type="molecule type" value="mRNA"/>
</dbReference>
<dbReference type="EMBL" id="AC002335">
    <property type="protein sequence ID" value="AAB64312.1"/>
    <property type="molecule type" value="Genomic_DNA"/>
</dbReference>
<dbReference type="EMBL" id="CP002685">
    <property type="protein sequence ID" value="AEC10256.1"/>
    <property type="molecule type" value="Genomic_DNA"/>
</dbReference>
<dbReference type="PIR" id="S71201">
    <property type="entry name" value="S71201"/>
</dbReference>
<dbReference type="RefSeq" id="NP_181864.1">
    <property type="nucleotide sequence ID" value="NM_129897.4"/>
</dbReference>
<dbReference type="SMR" id="P54967"/>
<dbReference type="BioGRID" id="4274">
    <property type="interactions" value="1"/>
</dbReference>
<dbReference type="FunCoup" id="P54967">
    <property type="interactions" value="750"/>
</dbReference>
<dbReference type="STRING" id="3702.P54967"/>
<dbReference type="iPTMnet" id="P54967"/>
<dbReference type="MetOSite" id="P54967"/>
<dbReference type="PaxDb" id="3702-AT2G43360.1"/>
<dbReference type="ProteomicsDB" id="240695"/>
<dbReference type="EnsemblPlants" id="AT2G43360.1">
    <property type="protein sequence ID" value="AT2G43360.1"/>
    <property type="gene ID" value="AT2G43360"/>
</dbReference>
<dbReference type="GeneID" id="818937"/>
<dbReference type="Gramene" id="AT2G43360.1">
    <property type="protein sequence ID" value="AT2G43360.1"/>
    <property type="gene ID" value="AT2G43360"/>
</dbReference>
<dbReference type="KEGG" id="ath:AT2G43360"/>
<dbReference type="Araport" id="AT2G43360"/>
<dbReference type="TAIR" id="AT2G43360">
    <property type="gene designation" value="BIO2"/>
</dbReference>
<dbReference type="eggNOG" id="KOG2900">
    <property type="taxonomic scope" value="Eukaryota"/>
</dbReference>
<dbReference type="HOGENOM" id="CLU_033172_1_2_1"/>
<dbReference type="InParanoid" id="P54967"/>
<dbReference type="OMA" id="NICTTHT"/>
<dbReference type="OrthoDB" id="2414104at2759"/>
<dbReference type="PhylomeDB" id="P54967"/>
<dbReference type="UniPathway" id="UPA00078">
    <property type="reaction ID" value="UER00162"/>
</dbReference>
<dbReference type="PRO" id="PR:P54967"/>
<dbReference type="Proteomes" id="UP000006548">
    <property type="component" value="Chromosome 2"/>
</dbReference>
<dbReference type="ExpressionAtlas" id="P54967">
    <property type="expression patterns" value="baseline and differential"/>
</dbReference>
<dbReference type="GO" id="GO:0005739">
    <property type="term" value="C:mitochondrion"/>
    <property type="evidence" value="ECO:0007669"/>
    <property type="project" value="UniProtKB-SubCell"/>
</dbReference>
<dbReference type="GO" id="GO:0051537">
    <property type="term" value="F:2 iron, 2 sulfur cluster binding"/>
    <property type="evidence" value="ECO:0007669"/>
    <property type="project" value="UniProtKB-KW"/>
</dbReference>
<dbReference type="GO" id="GO:0051539">
    <property type="term" value="F:4 iron, 4 sulfur cluster binding"/>
    <property type="evidence" value="ECO:0007669"/>
    <property type="project" value="UniProtKB-KW"/>
</dbReference>
<dbReference type="GO" id="GO:0004076">
    <property type="term" value="F:biotin synthase activity"/>
    <property type="evidence" value="ECO:0007669"/>
    <property type="project" value="UniProtKB-EC"/>
</dbReference>
<dbReference type="GO" id="GO:0008270">
    <property type="term" value="F:zinc ion binding"/>
    <property type="evidence" value="ECO:0007005"/>
    <property type="project" value="TAIR"/>
</dbReference>
<dbReference type="GO" id="GO:0009102">
    <property type="term" value="P:biotin biosynthetic process"/>
    <property type="evidence" value="ECO:0007669"/>
    <property type="project" value="UniProtKB-UniPathway"/>
</dbReference>
<dbReference type="CDD" id="cd01335">
    <property type="entry name" value="Radical_SAM"/>
    <property type="match status" value="1"/>
</dbReference>
<dbReference type="FunFam" id="3.20.20.70:FF:000011">
    <property type="entry name" value="Biotin synthase"/>
    <property type="match status" value="1"/>
</dbReference>
<dbReference type="Gene3D" id="3.20.20.70">
    <property type="entry name" value="Aldolase class I"/>
    <property type="match status" value="1"/>
</dbReference>
<dbReference type="HAMAP" id="MF_01694">
    <property type="entry name" value="BioB"/>
    <property type="match status" value="1"/>
</dbReference>
<dbReference type="InterPro" id="IPR013785">
    <property type="entry name" value="Aldolase_TIM"/>
</dbReference>
<dbReference type="InterPro" id="IPR010722">
    <property type="entry name" value="BATS_dom"/>
</dbReference>
<dbReference type="InterPro" id="IPR002684">
    <property type="entry name" value="Biotin_synth/BioAB"/>
</dbReference>
<dbReference type="InterPro" id="IPR024177">
    <property type="entry name" value="Biotin_synthase"/>
</dbReference>
<dbReference type="InterPro" id="IPR006638">
    <property type="entry name" value="Elp3/MiaA/NifB-like_rSAM"/>
</dbReference>
<dbReference type="InterPro" id="IPR007197">
    <property type="entry name" value="rSAM"/>
</dbReference>
<dbReference type="NCBIfam" id="TIGR00433">
    <property type="entry name" value="bioB"/>
    <property type="match status" value="1"/>
</dbReference>
<dbReference type="PANTHER" id="PTHR22976">
    <property type="entry name" value="BIOTIN SYNTHASE"/>
    <property type="match status" value="1"/>
</dbReference>
<dbReference type="PANTHER" id="PTHR22976:SF2">
    <property type="entry name" value="BIOTIN SYNTHASE, MITOCHONDRIAL"/>
    <property type="match status" value="1"/>
</dbReference>
<dbReference type="Pfam" id="PF06968">
    <property type="entry name" value="BATS"/>
    <property type="match status" value="1"/>
</dbReference>
<dbReference type="Pfam" id="PF04055">
    <property type="entry name" value="Radical_SAM"/>
    <property type="match status" value="1"/>
</dbReference>
<dbReference type="PIRSF" id="PIRSF001619">
    <property type="entry name" value="Biotin_synth"/>
    <property type="match status" value="1"/>
</dbReference>
<dbReference type="SFLD" id="SFLDG01060">
    <property type="entry name" value="BATS_domain_containing"/>
    <property type="match status" value="1"/>
</dbReference>
<dbReference type="SFLD" id="SFLDF00272">
    <property type="entry name" value="biotin_synthase"/>
    <property type="match status" value="1"/>
</dbReference>
<dbReference type="SMART" id="SM00876">
    <property type="entry name" value="BATS"/>
    <property type="match status" value="1"/>
</dbReference>
<dbReference type="SMART" id="SM00729">
    <property type="entry name" value="Elp3"/>
    <property type="match status" value="1"/>
</dbReference>
<dbReference type="SUPFAM" id="SSF102114">
    <property type="entry name" value="Radical SAM enzymes"/>
    <property type="match status" value="1"/>
</dbReference>
<dbReference type="PROSITE" id="PS51918">
    <property type="entry name" value="RADICAL_SAM"/>
    <property type="match status" value="1"/>
</dbReference>
<sequence>MMLVRSVFRSQLRPSVSGGLQSASCYSSLSAASAEAERTIREGPRNDWSRDEIKSVYDSPLLDLLFHGAQVHRHVHNFREVQQCTLLSIKTGGCSEDCSYCPQSSRYSTGVKAQRLMSKDAVIDAAKKAKEAGSTRFCMGAAWRDTIGRKTNFSQILEYIKEIRGMGMEVCCTLGMIEKQQALELKKAGLTAYNHNLDTSREYYPNVITTRSYDDRLETLSHVRDAGINVCSGGIIGLGEAEEDRIGLLHTLATLPSHPESVPINALLAVKGTPLEDQKPVEIWEMIRMIGTARIVMPKAMVRLSAGRVRFSMSEQALCFLAGANSIFTGEKLLTTPNNDFDADQLMFKTLGLIPKPPSFSEDDSESENCEKVASASH</sequence>
<protein>
    <recommendedName>
        <fullName>Biotin synthase, mitochondrial</fullName>
        <ecNumber>2.8.1.6</ecNumber>
    </recommendedName>
</protein>
<reference key="1">
    <citation type="journal article" date="1996" name="Plant Physiol.">
        <title>Characterization of the cDNA and gene coding for the biotin synthase of Arabidopsis thaliana.</title>
        <authorList>
            <person name="Weaver L.M."/>
            <person name="Yu F."/>
            <person name="Wurtele E.S."/>
            <person name="Nikolau B.J."/>
        </authorList>
    </citation>
    <scope>NUCLEOTIDE SEQUENCE [GENOMIC DNA / MRNA]</scope>
    <source>
        <strain>cv. Landsberg erecta</strain>
    </source>
</reference>
<reference key="2">
    <citation type="journal article" date="1996" name="Plant Physiol.">
        <title>Biotin synthase from Arabidopsis thaliana. cDNA isolation and characterization of gene expression.</title>
        <authorList>
            <person name="Patton D.A."/>
            <person name="Johnson M."/>
            <person name="Ward E.R."/>
        </authorList>
    </citation>
    <scope>NUCLEOTIDE SEQUENCE [MRNA]</scope>
    <source>
        <strain>cv. Columbia</strain>
        <tissue>Leaf</tissue>
    </source>
</reference>
<reference key="3">
    <citation type="journal article" date="1996" name="C. R. Acad. Sci. III, Sci. Vie">
        <title>Biotin synthesis in higher plants: isolation of a cDNA encoding Arabidopsis thaliana bioB-gene product equivalent by functional complementation of a biotin auxotroph mutant bioB105 of Escherichia coli K12.</title>
        <authorList>
            <person name="Baldet P."/>
            <person name="Ruffet M.L."/>
        </authorList>
    </citation>
    <scope>NUCLEOTIDE SEQUENCE [MRNA]</scope>
    <source>
        <strain>cv. Columbia</strain>
        <tissue>Leaf</tissue>
    </source>
</reference>
<reference key="4">
    <citation type="journal article" date="1999" name="Nature">
        <title>Sequence and analysis of chromosome 2 of the plant Arabidopsis thaliana.</title>
        <authorList>
            <person name="Lin X."/>
            <person name="Kaul S."/>
            <person name="Rounsley S.D."/>
            <person name="Shea T.P."/>
            <person name="Benito M.-I."/>
            <person name="Town C.D."/>
            <person name="Fujii C.Y."/>
            <person name="Mason T.M."/>
            <person name="Bowman C.L."/>
            <person name="Barnstead M.E."/>
            <person name="Feldblyum T.V."/>
            <person name="Buell C.R."/>
            <person name="Ketchum K.A."/>
            <person name="Lee J.J."/>
            <person name="Ronning C.M."/>
            <person name="Koo H.L."/>
            <person name="Moffat K.S."/>
            <person name="Cronin L.A."/>
            <person name="Shen M."/>
            <person name="Pai G."/>
            <person name="Van Aken S."/>
            <person name="Umayam L."/>
            <person name="Tallon L.J."/>
            <person name="Gill J.E."/>
            <person name="Adams M.D."/>
            <person name="Carrera A.J."/>
            <person name="Creasy T.H."/>
            <person name="Goodman H.M."/>
            <person name="Somerville C.R."/>
            <person name="Copenhaver G.P."/>
            <person name="Preuss D."/>
            <person name="Nierman W.C."/>
            <person name="White O."/>
            <person name="Eisen J.A."/>
            <person name="Salzberg S.L."/>
            <person name="Fraser C.M."/>
            <person name="Venter J.C."/>
        </authorList>
    </citation>
    <scope>NUCLEOTIDE SEQUENCE [LARGE SCALE GENOMIC DNA]</scope>
    <source>
        <strain>cv. Columbia</strain>
    </source>
</reference>
<reference key="5">
    <citation type="journal article" date="2017" name="Plant J.">
        <title>Araport11: a complete reannotation of the Arabidopsis thaliana reference genome.</title>
        <authorList>
            <person name="Cheng C.Y."/>
            <person name="Krishnakumar V."/>
            <person name="Chan A.P."/>
            <person name="Thibaud-Nissen F."/>
            <person name="Schobel S."/>
            <person name="Town C.D."/>
        </authorList>
    </citation>
    <scope>GENOME REANNOTATION</scope>
    <source>
        <strain>cv. Columbia</strain>
    </source>
</reference>
<reference key="6">
    <citation type="journal article" date="2015" name="J. Exp. Bot.">
        <title>Identification of cleavage sites and substrate proteins for two mitochondrial intermediate peptidases in Arabidopsis thaliana.</title>
        <authorList>
            <person name="Carrie C."/>
            <person name="Venne A.S."/>
            <person name="Zahedi R.P."/>
            <person name="Soll J."/>
        </authorList>
    </citation>
    <scope>IDENTIFICATION BY MASS SPECTROMETRY</scope>
    <scope>CLEAVAGE OF TRANSIT PEPTIDE AFTER TYR-26</scope>
</reference>